<gene>
    <name evidence="2" type="primary">ZOX1</name>
</gene>
<evidence type="ECO:0000269" key="1">
    <source>
    </source>
</evidence>
<evidence type="ECO:0000303" key="2">
    <source>
    </source>
</evidence>
<evidence type="ECO:0000305" key="3"/>
<dbReference type="EC" id="2.4.2.40" evidence="1"/>
<dbReference type="EMBL" id="AF116858">
    <property type="protein sequence ID" value="AAD51778.1"/>
    <property type="molecule type" value="Genomic_DNA"/>
</dbReference>
<dbReference type="RefSeq" id="XP_007145586.1">
    <property type="nucleotide sequence ID" value="XM_007145524.1"/>
</dbReference>
<dbReference type="SMR" id="P56725"/>
<dbReference type="CAZy" id="GT1">
    <property type="family name" value="Glycosyltransferase Family 1"/>
</dbReference>
<dbReference type="EnsemblPlants" id="ESW17580">
    <property type="protein sequence ID" value="ESW17580"/>
    <property type="gene ID" value="PHAVU_007G251000g"/>
</dbReference>
<dbReference type="Gramene" id="ESW17580">
    <property type="protein sequence ID" value="ESW17580"/>
    <property type="gene ID" value="PHAVU_007G251000g"/>
</dbReference>
<dbReference type="eggNOG" id="KOG1192">
    <property type="taxonomic scope" value="Eukaryota"/>
</dbReference>
<dbReference type="OMA" id="HASNKFP"/>
<dbReference type="OrthoDB" id="5835829at2759"/>
<dbReference type="BRENDA" id="2.4.2.40">
    <property type="organism ID" value="4746"/>
</dbReference>
<dbReference type="SABIO-RK" id="P56725"/>
<dbReference type="GO" id="GO:0050404">
    <property type="term" value="F:zeatin O-beta-D-xylosyltransferase activity"/>
    <property type="evidence" value="ECO:0000314"/>
    <property type="project" value="AgBase"/>
</dbReference>
<dbReference type="GO" id="GO:0009690">
    <property type="term" value="P:cytokinin metabolic process"/>
    <property type="evidence" value="ECO:0000304"/>
    <property type="project" value="AgBase"/>
</dbReference>
<dbReference type="GO" id="GO:0006486">
    <property type="term" value="P:protein glycosylation"/>
    <property type="evidence" value="ECO:0000314"/>
    <property type="project" value="AgBase"/>
</dbReference>
<dbReference type="CDD" id="cd03784">
    <property type="entry name" value="GT1_Gtf-like"/>
    <property type="match status" value="1"/>
</dbReference>
<dbReference type="FunFam" id="3.40.50.2000:FF:000060">
    <property type="entry name" value="Glycosyltransferase"/>
    <property type="match status" value="1"/>
</dbReference>
<dbReference type="FunFam" id="3.40.50.2000:FF:000238">
    <property type="entry name" value="Glycosyltransferase"/>
    <property type="match status" value="1"/>
</dbReference>
<dbReference type="Gene3D" id="3.40.50.2000">
    <property type="entry name" value="Glycogen Phosphorylase B"/>
    <property type="match status" value="2"/>
</dbReference>
<dbReference type="InterPro" id="IPR002213">
    <property type="entry name" value="UDP_glucos_trans"/>
</dbReference>
<dbReference type="InterPro" id="IPR035595">
    <property type="entry name" value="UDP_glycos_trans_CS"/>
</dbReference>
<dbReference type="PANTHER" id="PTHR48044">
    <property type="entry name" value="GLYCOSYLTRANSFERASE"/>
    <property type="match status" value="1"/>
</dbReference>
<dbReference type="PANTHER" id="PTHR48044:SF27">
    <property type="entry name" value="GLYCOSYLTRANSFERASE"/>
    <property type="match status" value="1"/>
</dbReference>
<dbReference type="Pfam" id="PF00201">
    <property type="entry name" value="UDPGT"/>
    <property type="match status" value="1"/>
</dbReference>
<dbReference type="SUPFAM" id="SSF53756">
    <property type="entry name" value="UDP-Glycosyltransferase/glycogen phosphorylase"/>
    <property type="match status" value="1"/>
</dbReference>
<dbReference type="PROSITE" id="PS00375">
    <property type="entry name" value="UDPGT"/>
    <property type="match status" value="1"/>
</dbReference>
<accession>P56725</accession>
<protein>
    <recommendedName>
        <fullName evidence="2">Zeatin O-xylosyltransferase</fullName>
        <ecNumber evidence="1">2.4.2.40</ecNumber>
    </recommendedName>
    <alternativeName>
        <fullName evidence="3">Zeatin O-beta-D-xylosyltransferase</fullName>
    </alternativeName>
</protein>
<sequence length="454" mass="50972">MALNDETKVVVLLLPFPVQGHLNPFLQLSHLIAAQNIAVHYVGTVTHIRQAKLRYHNATSNIHFHAFEVPPYVSPPPNPEDDFPSHLIPSFEASAHLREPVGKLLQSLSSQAKRVVLINDSLMASVAQDAANFSNVERYCFQVFSALNTAGDFWEQMGKPPLADFHFPDIPSLQGCISAQFTDFLTAQNEFRKFNNGDIYNTSRVIEGPYVELLERFNGGKEVWALGPFTPLAVEKKDSIGFSHPCMEWLDKQEPSSVIYVSFGTTTALRDEQIQELATGLEQSKQKFIWVLRDADKGDIFDGSEAKRYELPEGFEERVEGMGLVVRDWAPQMEILSHSSTGGFMSHCGWNSCLESLTRGVPMATWAMHSDQPRNAVLVTDVLKVGLIVKDWEQRKSLVSASVIENAVRRLMETKEGDEIRKRAVKLKDEIHRSMDEGGVSRMEMASFIAHISR</sequence>
<organism>
    <name type="scientific">Phaseolus vulgaris</name>
    <name type="common">Kidney bean</name>
    <name type="synonym">French bean</name>
    <dbReference type="NCBI Taxonomy" id="3885"/>
    <lineage>
        <taxon>Eukaryota</taxon>
        <taxon>Viridiplantae</taxon>
        <taxon>Streptophyta</taxon>
        <taxon>Embryophyta</taxon>
        <taxon>Tracheophyta</taxon>
        <taxon>Spermatophyta</taxon>
        <taxon>Magnoliopsida</taxon>
        <taxon>eudicotyledons</taxon>
        <taxon>Gunneridae</taxon>
        <taxon>Pentapetalae</taxon>
        <taxon>rosids</taxon>
        <taxon>fabids</taxon>
        <taxon>Fabales</taxon>
        <taxon>Fabaceae</taxon>
        <taxon>Papilionoideae</taxon>
        <taxon>50 kb inversion clade</taxon>
        <taxon>NPAAA clade</taxon>
        <taxon>indigoferoid/millettioid clade</taxon>
        <taxon>Phaseoleae</taxon>
        <taxon>Phaseolus</taxon>
    </lineage>
</organism>
<comment type="function">
    <text evidence="1">Utilizes UDP-xylose as the sugar donor and catalyzes the formation of o-xylosylzeatin from zeatin. Does not act on UDP-glucose.</text>
</comment>
<comment type="catalytic activity">
    <reaction evidence="1">
        <text>zeatin + UDP-alpha-D-xylose = O-beta-D-xylosylzeatin + UDP + H(+)</text>
        <dbReference type="Rhea" id="RHEA:14721"/>
        <dbReference type="ChEBI" id="CHEBI:15333"/>
        <dbReference type="ChEBI" id="CHEBI:15378"/>
        <dbReference type="ChEBI" id="CHEBI:17438"/>
        <dbReference type="ChEBI" id="CHEBI:57632"/>
        <dbReference type="ChEBI" id="CHEBI:58223"/>
        <dbReference type="EC" id="2.4.2.40"/>
    </reaction>
    <physiologicalReaction direction="left-to-right" evidence="1">
        <dbReference type="Rhea" id="RHEA:14722"/>
    </physiologicalReaction>
</comment>
<comment type="tissue specificity">
    <text evidence="1">High level in young seeds, less in older seeds and very low in roots.</text>
</comment>
<comment type="similarity">
    <text evidence="3">Belongs to the UDP-glycosyltransferase family.</text>
</comment>
<proteinExistence type="evidence at protein level"/>
<keyword id="KW-0328">Glycosyltransferase</keyword>
<keyword id="KW-0808">Transferase</keyword>
<name>ZOX_PHAVU</name>
<reference key="1">
    <citation type="journal article" date="1999" name="Plant Physiol.">
        <title>A gene encoding the cytokinin enzyme zeatin O-xylosyltransferase of Phaseolus vulgaris.</title>
        <authorList>
            <person name="Martin R.C."/>
            <person name="Mok M.C."/>
            <person name="Mok D.W.S."/>
        </authorList>
    </citation>
    <scope>NUCLEOTIDE SEQUENCE [GENOMIC DNA]</scope>
    <scope>FUNCTION</scope>
    <scope>CATALYTIC ACTIVITY</scope>
    <scope>TISSUE SPECIFICITY</scope>
    <source>
        <strain>cv. Great Northern</strain>
    </source>
</reference>
<feature type="chain" id="PRO_0000074170" description="Zeatin O-xylosyltransferase">
    <location>
        <begin position="1"/>
        <end position="454"/>
    </location>
</feature>